<proteinExistence type="inferred from homology"/>
<organism>
    <name type="scientific">Deinococcus radiodurans (strain ATCC 13939 / DSM 20539 / JCM 16871 / CCUG 27074 / LMG 4051 / NBRC 15346 / NCIMB 9279 / VKM B-1422 / R1)</name>
    <dbReference type="NCBI Taxonomy" id="243230"/>
    <lineage>
        <taxon>Bacteria</taxon>
        <taxon>Thermotogati</taxon>
        <taxon>Deinococcota</taxon>
        <taxon>Deinococci</taxon>
        <taxon>Deinococcales</taxon>
        <taxon>Deinococcaceae</taxon>
        <taxon>Deinococcus</taxon>
    </lineage>
</organism>
<comment type="function">
    <text evidence="1">Major role in the synthesis of nucleoside triphosphates other than ATP. The ATP gamma phosphate is transferred to the NDP beta phosphate via a ping-pong mechanism, using a phosphorylated active-site intermediate.</text>
</comment>
<comment type="catalytic activity">
    <reaction evidence="1">
        <text>a 2'-deoxyribonucleoside 5'-diphosphate + ATP = a 2'-deoxyribonucleoside 5'-triphosphate + ADP</text>
        <dbReference type="Rhea" id="RHEA:44640"/>
        <dbReference type="ChEBI" id="CHEBI:30616"/>
        <dbReference type="ChEBI" id="CHEBI:61560"/>
        <dbReference type="ChEBI" id="CHEBI:73316"/>
        <dbReference type="ChEBI" id="CHEBI:456216"/>
        <dbReference type="EC" id="2.7.4.6"/>
    </reaction>
</comment>
<comment type="catalytic activity">
    <reaction evidence="1">
        <text>a ribonucleoside 5'-diphosphate + ATP = a ribonucleoside 5'-triphosphate + ADP</text>
        <dbReference type="Rhea" id="RHEA:18113"/>
        <dbReference type="ChEBI" id="CHEBI:30616"/>
        <dbReference type="ChEBI" id="CHEBI:57930"/>
        <dbReference type="ChEBI" id="CHEBI:61557"/>
        <dbReference type="ChEBI" id="CHEBI:456216"/>
        <dbReference type="EC" id="2.7.4.6"/>
    </reaction>
</comment>
<comment type="cofactor">
    <cofactor evidence="1">
        <name>Mg(2+)</name>
        <dbReference type="ChEBI" id="CHEBI:18420"/>
    </cofactor>
</comment>
<comment type="subunit">
    <text evidence="1">Homotetramer.</text>
</comment>
<comment type="subcellular location">
    <subcellularLocation>
        <location evidence="1">Cytoplasm</location>
    </subcellularLocation>
</comment>
<comment type="similarity">
    <text evidence="1">Belongs to the NDK family.</text>
</comment>
<comment type="sequence caution" evidence="2">
    <conflict type="erroneous initiation">
        <sequence resource="EMBL-CDS" id="AAF12041"/>
    </conflict>
</comment>
<name>NDK_DEIRA</name>
<protein>
    <recommendedName>
        <fullName evidence="1">Nucleoside diphosphate kinase</fullName>
        <shortName evidence="1">NDK</shortName>
        <shortName evidence="1">NDP kinase</shortName>
        <ecNumber evidence="1">2.7.4.6</ecNumber>
    </recommendedName>
    <alternativeName>
        <fullName evidence="1">Nucleoside-2-P kinase</fullName>
    </alternativeName>
</protein>
<dbReference type="EC" id="2.7.4.6" evidence="1"/>
<dbReference type="EMBL" id="AE000513">
    <property type="protein sequence ID" value="AAF12041.1"/>
    <property type="status" value="ALT_INIT"/>
    <property type="molecule type" value="Genomic_DNA"/>
</dbReference>
<dbReference type="PIR" id="F75266">
    <property type="entry name" value="F75266"/>
</dbReference>
<dbReference type="RefSeq" id="NP_296219.1">
    <property type="nucleotide sequence ID" value="NC_001263.1"/>
</dbReference>
<dbReference type="RefSeq" id="WP_027480121.1">
    <property type="nucleotide sequence ID" value="NC_001263.1"/>
</dbReference>
<dbReference type="SMR" id="Q9RRJ1"/>
<dbReference type="FunCoup" id="Q9RRJ1">
    <property type="interactions" value="443"/>
</dbReference>
<dbReference type="STRING" id="243230.DR_2499"/>
<dbReference type="PaxDb" id="243230-DR_2499"/>
<dbReference type="EnsemblBacteria" id="AAF12041">
    <property type="protein sequence ID" value="AAF12041"/>
    <property type="gene ID" value="DR_2499"/>
</dbReference>
<dbReference type="GeneID" id="69518752"/>
<dbReference type="KEGG" id="dra:DR_2499"/>
<dbReference type="PATRIC" id="fig|243230.17.peg.2739"/>
<dbReference type="eggNOG" id="COG0105">
    <property type="taxonomic scope" value="Bacteria"/>
</dbReference>
<dbReference type="HOGENOM" id="CLU_060216_8_1_0"/>
<dbReference type="InParanoid" id="Q9RRJ1"/>
<dbReference type="OrthoDB" id="9801161at2"/>
<dbReference type="Proteomes" id="UP000002524">
    <property type="component" value="Chromosome 1"/>
</dbReference>
<dbReference type="GO" id="GO:0005737">
    <property type="term" value="C:cytoplasm"/>
    <property type="evidence" value="ECO:0007669"/>
    <property type="project" value="UniProtKB-SubCell"/>
</dbReference>
<dbReference type="GO" id="GO:0005524">
    <property type="term" value="F:ATP binding"/>
    <property type="evidence" value="ECO:0007669"/>
    <property type="project" value="UniProtKB-UniRule"/>
</dbReference>
<dbReference type="GO" id="GO:0046872">
    <property type="term" value="F:metal ion binding"/>
    <property type="evidence" value="ECO:0007669"/>
    <property type="project" value="UniProtKB-KW"/>
</dbReference>
<dbReference type="GO" id="GO:0004550">
    <property type="term" value="F:nucleoside diphosphate kinase activity"/>
    <property type="evidence" value="ECO:0007669"/>
    <property type="project" value="UniProtKB-UniRule"/>
</dbReference>
<dbReference type="GO" id="GO:0006241">
    <property type="term" value="P:CTP biosynthetic process"/>
    <property type="evidence" value="ECO:0007669"/>
    <property type="project" value="UniProtKB-UniRule"/>
</dbReference>
<dbReference type="GO" id="GO:0006183">
    <property type="term" value="P:GTP biosynthetic process"/>
    <property type="evidence" value="ECO:0007669"/>
    <property type="project" value="UniProtKB-UniRule"/>
</dbReference>
<dbReference type="GO" id="GO:0006228">
    <property type="term" value="P:UTP biosynthetic process"/>
    <property type="evidence" value="ECO:0007669"/>
    <property type="project" value="UniProtKB-UniRule"/>
</dbReference>
<dbReference type="CDD" id="cd04413">
    <property type="entry name" value="NDPk_I"/>
    <property type="match status" value="1"/>
</dbReference>
<dbReference type="FunFam" id="3.30.70.141:FF:000003">
    <property type="entry name" value="Nucleoside diphosphate kinase"/>
    <property type="match status" value="1"/>
</dbReference>
<dbReference type="Gene3D" id="3.30.70.141">
    <property type="entry name" value="Nucleoside diphosphate kinase-like domain"/>
    <property type="match status" value="1"/>
</dbReference>
<dbReference type="HAMAP" id="MF_00451">
    <property type="entry name" value="NDP_kinase"/>
    <property type="match status" value="1"/>
</dbReference>
<dbReference type="InterPro" id="IPR034907">
    <property type="entry name" value="NDK-like_dom"/>
</dbReference>
<dbReference type="InterPro" id="IPR036850">
    <property type="entry name" value="NDK-like_dom_sf"/>
</dbReference>
<dbReference type="InterPro" id="IPR001564">
    <property type="entry name" value="Nucleoside_diP_kinase"/>
</dbReference>
<dbReference type="InterPro" id="IPR023005">
    <property type="entry name" value="Nucleoside_diP_kinase_AS"/>
</dbReference>
<dbReference type="NCBIfam" id="NF001908">
    <property type="entry name" value="PRK00668.1"/>
    <property type="match status" value="1"/>
</dbReference>
<dbReference type="PANTHER" id="PTHR11349">
    <property type="entry name" value="NUCLEOSIDE DIPHOSPHATE KINASE"/>
    <property type="match status" value="1"/>
</dbReference>
<dbReference type="Pfam" id="PF00334">
    <property type="entry name" value="NDK"/>
    <property type="match status" value="1"/>
</dbReference>
<dbReference type="PRINTS" id="PR01243">
    <property type="entry name" value="NUCDPKINASE"/>
</dbReference>
<dbReference type="SMART" id="SM00562">
    <property type="entry name" value="NDK"/>
    <property type="match status" value="1"/>
</dbReference>
<dbReference type="SUPFAM" id="SSF54919">
    <property type="entry name" value="Nucleoside diphosphate kinase, NDK"/>
    <property type="match status" value="1"/>
</dbReference>
<dbReference type="PROSITE" id="PS00469">
    <property type="entry name" value="NDPK"/>
    <property type="match status" value="1"/>
</dbReference>
<dbReference type="PROSITE" id="PS51374">
    <property type="entry name" value="NDPK_LIKE"/>
    <property type="match status" value="1"/>
</dbReference>
<accession>Q9RRJ1</accession>
<feature type="chain" id="PRO_0000136975" description="Nucleoside diphosphate kinase">
    <location>
        <begin position="1"/>
        <end position="138"/>
    </location>
</feature>
<feature type="active site" description="Pros-phosphohistidine intermediate" evidence="1">
    <location>
        <position position="115"/>
    </location>
</feature>
<feature type="binding site" evidence="1">
    <location>
        <position position="9"/>
    </location>
    <ligand>
        <name>ATP</name>
        <dbReference type="ChEBI" id="CHEBI:30616"/>
    </ligand>
</feature>
<feature type="binding site" evidence="1">
    <location>
        <position position="57"/>
    </location>
    <ligand>
        <name>ATP</name>
        <dbReference type="ChEBI" id="CHEBI:30616"/>
    </ligand>
</feature>
<feature type="binding site" evidence="1">
    <location>
        <position position="85"/>
    </location>
    <ligand>
        <name>ATP</name>
        <dbReference type="ChEBI" id="CHEBI:30616"/>
    </ligand>
</feature>
<feature type="binding site" evidence="1">
    <location>
        <position position="91"/>
    </location>
    <ligand>
        <name>ATP</name>
        <dbReference type="ChEBI" id="CHEBI:30616"/>
    </ligand>
</feature>
<feature type="binding site" evidence="1">
    <location>
        <position position="102"/>
    </location>
    <ligand>
        <name>ATP</name>
        <dbReference type="ChEBI" id="CHEBI:30616"/>
    </ligand>
</feature>
<feature type="binding site" evidence="1">
    <location>
        <position position="112"/>
    </location>
    <ligand>
        <name>ATP</name>
        <dbReference type="ChEBI" id="CHEBI:30616"/>
    </ligand>
</feature>
<reference key="1">
    <citation type="journal article" date="1999" name="Science">
        <title>Genome sequence of the radioresistant bacterium Deinococcus radiodurans R1.</title>
        <authorList>
            <person name="White O."/>
            <person name="Eisen J.A."/>
            <person name="Heidelberg J.F."/>
            <person name="Hickey E.K."/>
            <person name="Peterson J.D."/>
            <person name="Dodson R.J."/>
            <person name="Haft D.H."/>
            <person name="Gwinn M.L."/>
            <person name="Nelson W.C."/>
            <person name="Richardson D.L."/>
            <person name="Moffat K.S."/>
            <person name="Qin H."/>
            <person name="Jiang L."/>
            <person name="Pamphile W."/>
            <person name="Crosby M."/>
            <person name="Shen M."/>
            <person name="Vamathevan J.J."/>
            <person name="Lam P."/>
            <person name="McDonald L.A."/>
            <person name="Utterback T.R."/>
            <person name="Zalewski C."/>
            <person name="Makarova K.S."/>
            <person name="Aravind L."/>
            <person name="Daly M.J."/>
            <person name="Minton K.W."/>
            <person name="Fleischmann R.D."/>
            <person name="Ketchum K.A."/>
            <person name="Nelson K.E."/>
            <person name="Salzberg S.L."/>
            <person name="Smith H.O."/>
            <person name="Venter J.C."/>
            <person name="Fraser C.M."/>
        </authorList>
    </citation>
    <scope>NUCLEOTIDE SEQUENCE [LARGE SCALE GENOMIC DNA]</scope>
    <source>
        <strain>ATCC 13939 / DSM 20539 / JCM 16871 / CCUG 27074 / LMG 4051 / NBRC 15346 / NCIMB 9279 / VKM B-1422 / R1</strain>
    </source>
</reference>
<sequence>MERTFAMIKPDGVRRGLTPEILARIHNKGYRVVGLKQMMMPRETAEQHYGEHRERPFFGELVDFITGGPVVAIALEGENAIAGWRAMMGATNPANAAPGTIRADFATSTGENVTHGSDSPESAERELALFFGDGELLS</sequence>
<evidence type="ECO:0000255" key="1">
    <source>
        <dbReference type="HAMAP-Rule" id="MF_00451"/>
    </source>
</evidence>
<evidence type="ECO:0000305" key="2"/>
<keyword id="KW-0067">ATP-binding</keyword>
<keyword id="KW-0963">Cytoplasm</keyword>
<keyword id="KW-0418">Kinase</keyword>
<keyword id="KW-0460">Magnesium</keyword>
<keyword id="KW-0479">Metal-binding</keyword>
<keyword id="KW-0546">Nucleotide metabolism</keyword>
<keyword id="KW-0547">Nucleotide-binding</keyword>
<keyword id="KW-0597">Phosphoprotein</keyword>
<keyword id="KW-1185">Reference proteome</keyword>
<keyword id="KW-0808">Transferase</keyword>
<gene>
    <name evidence="1" type="primary">ndk</name>
    <name type="ordered locus">DR_2499</name>
</gene>